<gene>
    <name evidence="1" type="primary">mdtH</name>
    <name type="ordered locus">YPO2040</name>
    <name type="ordered locus">y2272</name>
    <name type="ordered locus">YP_1883</name>
</gene>
<organism>
    <name type="scientific">Yersinia pestis</name>
    <dbReference type="NCBI Taxonomy" id="632"/>
    <lineage>
        <taxon>Bacteria</taxon>
        <taxon>Pseudomonadati</taxon>
        <taxon>Pseudomonadota</taxon>
        <taxon>Gammaproteobacteria</taxon>
        <taxon>Enterobacterales</taxon>
        <taxon>Yersiniaceae</taxon>
        <taxon>Yersinia</taxon>
    </lineage>
</organism>
<reference key="1">
    <citation type="journal article" date="2001" name="Nature">
        <title>Genome sequence of Yersinia pestis, the causative agent of plague.</title>
        <authorList>
            <person name="Parkhill J."/>
            <person name="Wren B.W."/>
            <person name="Thomson N.R."/>
            <person name="Titball R.W."/>
            <person name="Holden M.T.G."/>
            <person name="Prentice M.B."/>
            <person name="Sebaihia M."/>
            <person name="James K.D."/>
            <person name="Churcher C.M."/>
            <person name="Mungall K.L."/>
            <person name="Baker S."/>
            <person name="Basham D."/>
            <person name="Bentley S.D."/>
            <person name="Brooks K."/>
            <person name="Cerdeno-Tarraga A.-M."/>
            <person name="Chillingworth T."/>
            <person name="Cronin A."/>
            <person name="Davies R.M."/>
            <person name="Davis P."/>
            <person name="Dougan G."/>
            <person name="Feltwell T."/>
            <person name="Hamlin N."/>
            <person name="Holroyd S."/>
            <person name="Jagels K."/>
            <person name="Karlyshev A.V."/>
            <person name="Leather S."/>
            <person name="Moule S."/>
            <person name="Oyston P.C.F."/>
            <person name="Quail M.A."/>
            <person name="Rutherford K.M."/>
            <person name="Simmonds M."/>
            <person name="Skelton J."/>
            <person name="Stevens K."/>
            <person name="Whitehead S."/>
            <person name="Barrell B.G."/>
        </authorList>
    </citation>
    <scope>NUCLEOTIDE SEQUENCE [LARGE SCALE GENOMIC DNA]</scope>
    <source>
        <strain>CO-92 / Biovar Orientalis</strain>
    </source>
</reference>
<reference key="2">
    <citation type="journal article" date="2002" name="J. Bacteriol.">
        <title>Genome sequence of Yersinia pestis KIM.</title>
        <authorList>
            <person name="Deng W."/>
            <person name="Burland V."/>
            <person name="Plunkett G. III"/>
            <person name="Boutin A."/>
            <person name="Mayhew G.F."/>
            <person name="Liss P."/>
            <person name="Perna N.T."/>
            <person name="Rose D.J."/>
            <person name="Mau B."/>
            <person name="Zhou S."/>
            <person name="Schwartz D.C."/>
            <person name="Fetherston J.D."/>
            <person name="Lindler L.E."/>
            <person name="Brubaker R.R."/>
            <person name="Plano G.V."/>
            <person name="Straley S.C."/>
            <person name="McDonough K.A."/>
            <person name="Nilles M.L."/>
            <person name="Matson J.S."/>
            <person name="Blattner F.R."/>
            <person name="Perry R.D."/>
        </authorList>
    </citation>
    <scope>NUCLEOTIDE SEQUENCE [LARGE SCALE GENOMIC DNA]</scope>
    <source>
        <strain>KIM10+ / Biovar Mediaevalis</strain>
    </source>
</reference>
<reference key="3">
    <citation type="journal article" date="2004" name="DNA Res.">
        <title>Complete genome sequence of Yersinia pestis strain 91001, an isolate avirulent to humans.</title>
        <authorList>
            <person name="Song Y."/>
            <person name="Tong Z."/>
            <person name="Wang J."/>
            <person name="Wang L."/>
            <person name="Guo Z."/>
            <person name="Han Y."/>
            <person name="Zhang J."/>
            <person name="Pei D."/>
            <person name="Zhou D."/>
            <person name="Qin H."/>
            <person name="Pang X."/>
            <person name="Han Y."/>
            <person name="Zhai J."/>
            <person name="Li M."/>
            <person name="Cui B."/>
            <person name="Qi Z."/>
            <person name="Jin L."/>
            <person name="Dai R."/>
            <person name="Chen F."/>
            <person name="Li S."/>
            <person name="Ye C."/>
            <person name="Du Z."/>
            <person name="Lin W."/>
            <person name="Wang J."/>
            <person name="Yu J."/>
            <person name="Yang H."/>
            <person name="Wang J."/>
            <person name="Huang P."/>
            <person name="Yang R."/>
        </authorList>
    </citation>
    <scope>NUCLEOTIDE SEQUENCE [LARGE SCALE GENOMIC DNA]</scope>
    <source>
        <strain>91001 / Biovar Mediaevalis</strain>
    </source>
</reference>
<evidence type="ECO:0000255" key="1">
    <source>
        <dbReference type="HAMAP-Rule" id="MF_01529"/>
    </source>
</evidence>
<dbReference type="EMBL" id="AL590842">
    <property type="protein sequence ID" value="CAL20675.1"/>
    <property type="molecule type" value="Genomic_DNA"/>
</dbReference>
<dbReference type="EMBL" id="AE009952">
    <property type="protein sequence ID" value="AAM85832.1"/>
    <property type="molecule type" value="Genomic_DNA"/>
</dbReference>
<dbReference type="EMBL" id="AE017042">
    <property type="protein sequence ID" value="AAS62102.1"/>
    <property type="molecule type" value="Genomic_DNA"/>
</dbReference>
<dbReference type="PIR" id="AH0248">
    <property type="entry name" value="AH0248"/>
</dbReference>
<dbReference type="RefSeq" id="WP_002211217.1">
    <property type="nucleotide sequence ID" value="NZ_WUCM01000075.1"/>
</dbReference>
<dbReference type="RefSeq" id="YP_002347022.1">
    <property type="nucleotide sequence ID" value="NC_003143.1"/>
</dbReference>
<dbReference type="SMR" id="Q8ZEW3"/>
<dbReference type="STRING" id="214092.YPO2040"/>
<dbReference type="PaxDb" id="214092-YPO2040"/>
<dbReference type="DNASU" id="1147219"/>
<dbReference type="EnsemblBacteria" id="AAS62102">
    <property type="protein sequence ID" value="AAS62102"/>
    <property type="gene ID" value="YP_1883"/>
</dbReference>
<dbReference type="GeneID" id="57976620"/>
<dbReference type="KEGG" id="ype:YPO2040"/>
<dbReference type="KEGG" id="ypk:y2272"/>
<dbReference type="KEGG" id="ypm:YP_1883"/>
<dbReference type="PATRIC" id="fig|214092.21.peg.2425"/>
<dbReference type="eggNOG" id="COG0477">
    <property type="taxonomic scope" value="Bacteria"/>
</dbReference>
<dbReference type="HOGENOM" id="CLU_001265_60_2_6"/>
<dbReference type="OMA" id="FSLNYWA"/>
<dbReference type="OrthoDB" id="56516at2"/>
<dbReference type="Proteomes" id="UP000000815">
    <property type="component" value="Chromosome"/>
</dbReference>
<dbReference type="Proteomes" id="UP000001019">
    <property type="component" value="Chromosome"/>
</dbReference>
<dbReference type="Proteomes" id="UP000002490">
    <property type="component" value="Chromosome"/>
</dbReference>
<dbReference type="GO" id="GO:0005886">
    <property type="term" value="C:plasma membrane"/>
    <property type="evidence" value="ECO:0000318"/>
    <property type="project" value="GO_Central"/>
</dbReference>
<dbReference type="GO" id="GO:0022857">
    <property type="term" value="F:transmembrane transporter activity"/>
    <property type="evidence" value="ECO:0007669"/>
    <property type="project" value="UniProtKB-UniRule"/>
</dbReference>
<dbReference type="CDD" id="cd17329">
    <property type="entry name" value="MFS_MdtH_MDR_like"/>
    <property type="match status" value="1"/>
</dbReference>
<dbReference type="Gene3D" id="1.20.1250.20">
    <property type="entry name" value="MFS general substrate transporter like domains"/>
    <property type="match status" value="1"/>
</dbReference>
<dbReference type="HAMAP" id="MF_01529">
    <property type="entry name" value="MFS_MdtH"/>
    <property type="match status" value="1"/>
</dbReference>
<dbReference type="InterPro" id="IPR011701">
    <property type="entry name" value="MFS"/>
</dbReference>
<dbReference type="InterPro" id="IPR020846">
    <property type="entry name" value="MFS_dom"/>
</dbReference>
<dbReference type="InterPro" id="IPR036259">
    <property type="entry name" value="MFS_trans_sf"/>
</dbReference>
<dbReference type="InterPro" id="IPR050171">
    <property type="entry name" value="MFS_Transporters"/>
</dbReference>
<dbReference type="InterPro" id="IPR022855">
    <property type="entry name" value="Multidrug-R_MdtH"/>
</dbReference>
<dbReference type="NCBIfam" id="NF008650">
    <property type="entry name" value="PRK11646.1"/>
    <property type="match status" value="1"/>
</dbReference>
<dbReference type="PANTHER" id="PTHR23517:SF2">
    <property type="entry name" value="MULTIDRUG RESISTANCE PROTEIN MDTH"/>
    <property type="match status" value="1"/>
</dbReference>
<dbReference type="PANTHER" id="PTHR23517">
    <property type="entry name" value="RESISTANCE PROTEIN MDTM, PUTATIVE-RELATED-RELATED"/>
    <property type="match status" value="1"/>
</dbReference>
<dbReference type="Pfam" id="PF07690">
    <property type="entry name" value="MFS_1"/>
    <property type="match status" value="1"/>
</dbReference>
<dbReference type="SUPFAM" id="SSF103473">
    <property type="entry name" value="MFS general substrate transporter"/>
    <property type="match status" value="1"/>
</dbReference>
<dbReference type="PROSITE" id="PS50850">
    <property type="entry name" value="MFS"/>
    <property type="match status" value="1"/>
</dbReference>
<feature type="chain" id="PRO_0000173352" description="Multidrug resistance protein MdtH">
    <location>
        <begin position="1"/>
        <end position="401"/>
    </location>
</feature>
<feature type="transmembrane region" description="Helical" evidence="1">
    <location>
        <begin position="13"/>
        <end position="33"/>
    </location>
</feature>
<feature type="transmembrane region" description="Helical" evidence="1">
    <location>
        <begin position="34"/>
        <end position="54"/>
    </location>
</feature>
<feature type="transmembrane region" description="Helical" evidence="1">
    <location>
        <begin position="99"/>
        <end position="116"/>
    </location>
</feature>
<feature type="transmembrane region" description="Helical" evidence="1">
    <location>
        <begin position="139"/>
        <end position="159"/>
    </location>
</feature>
<feature type="transmembrane region" description="Helical" evidence="1">
    <location>
        <begin position="165"/>
        <end position="185"/>
    </location>
</feature>
<feature type="transmembrane region" description="Helical" evidence="1">
    <location>
        <begin position="214"/>
        <end position="234"/>
    </location>
</feature>
<feature type="transmembrane region" description="Helical" evidence="1">
    <location>
        <begin position="243"/>
        <end position="263"/>
    </location>
</feature>
<feature type="transmembrane region" description="Helical" evidence="1">
    <location>
        <begin position="277"/>
        <end position="297"/>
    </location>
</feature>
<feature type="transmembrane region" description="Helical" evidence="1">
    <location>
        <begin position="299"/>
        <end position="319"/>
    </location>
</feature>
<feature type="transmembrane region" description="Helical" evidence="1">
    <location>
        <begin position="340"/>
        <end position="360"/>
    </location>
</feature>
<feature type="transmembrane region" description="Helical" evidence="1">
    <location>
        <begin position="368"/>
        <end position="388"/>
    </location>
</feature>
<keyword id="KW-0997">Cell inner membrane</keyword>
<keyword id="KW-1003">Cell membrane</keyword>
<keyword id="KW-0472">Membrane</keyword>
<keyword id="KW-1185">Reference proteome</keyword>
<keyword id="KW-0812">Transmembrane</keyword>
<keyword id="KW-1133">Transmembrane helix</keyword>
<keyword id="KW-0813">Transport</keyword>
<accession>Q8ZEW3</accession>
<accession>Q0WFB6</accession>
<accession>Q74U60</accession>
<accession>Q7CIB0</accession>
<name>MDTH_YERPE</name>
<sequence length="401" mass="44285">MALVSQARSLGKYFLLFDNLLVVLGFFVVFPLISIRFVDQLGWAALVVGLALGLRQLVQQGLGIFGGAIADRFGAKPMIVTGMLMRAAGFALMAMADEPWILWLACALSGLGGTLFDPPRTALVIKLTRPHERGRFYSLLMMQDSAGAVIGALIGSWLLQYDFHFVCWTGAAIFVLAAGWNAWLLPAYRISTVRAPMKEGLMRVLRDRRFVTYVLTLTGYYMLAVQVMLMLPIVVNELAGSPAAVKWMYAIEAALSLTLLYPLARWSEKRFSLEQRLMAGLLIMTLSLFPIGMITHLQTLFMFICFFYMGSILAEPARETLGASLADSRARGSYMGFSRLGLALGGALGYTGGGWMYDTGKTLDMPELPWFLLGIIGLITLAGLYWQFNRRRIESAMLSSS</sequence>
<protein>
    <recommendedName>
        <fullName evidence="1">Multidrug resistance protein MdtH</fullName>
    </recommendedName>
</protein>
<proteinExistence type="inferred from homology"/>
<comment type="subcellular location">
    <subcellularLocation>
        <location evidence="1">Cell inner membrane</location>
        <topology evidence="1">Multi-pass membrane protein</topology>
    </subcellularLocation>
</comment>
<comment type="similarity">
    <text evidence="1">Belongs to the major facilitator superfamily. DHA1 family. MdtH (TC 2.A.1.2.21) subfamily.</text>
</comment>